<evidence type="ECO:0000255" key="1">
    <source>
        <dbReference type="HAMAP-Rule" id="MF_01452"/>
    </source>
</evidence>
<organism>
    <name type="scientific">Bacillus pumilus (strain SAFR-032)</name>
    <dbReference type="NCBI Taxonomy" id="315750"/>
    <lineage>
        <taxon>Bacteria</taxon>
        <taxon>Bacillati</taxon>
        <taxon>Bacillota</taxon>
        <taxon>Bacilli</taxon>
        <taxon>Bacillales</taxon>
        <taxon>Bacillaceae</taxon>
        <taxon>Bacillus</taxon>
    </lineage>
</organism>
<accession>A8FBR0</accession>
<dbReference type="EC" id="3.1.-.-" evidence="1"/>
<dbReference type="EMBL" id="CP000813">
    <property type="protein sequence ID" value="ABV61677.2"/>
    <property type="molecule type" value="Genomic_DNA"/>
</dbReference>
<dbReference type="RefSeq" id="WP_041815374.1">
    <property type="nucleotide sequence ID" value="NC_009848.4"/>
</dbReference>
<dbReference type="SMR" id="A8FBR0"/>
<dbReference type="STRING" id="315750.BPUM_0993"/>
<dbReference type="GeneID" id="23399386"/>
<dbReference type="KEGG" id="bpu:BPUM_0993"/>
<dbReference type="eggNOG" id="COG3857">
    <property type="taxonomic scope" value="Bacteria"/>
</dbReference>
<dbReference type="HOGENOM" id="CLU_007838_0_0_9"/>
<dbReference type="OrthoDB" id="9758506at2"/>
<dbReference type="Proteomes" id="UP000001355">
    <property type="component" value="Chromosome"/>
</dbReference>
<dbReference type="GO" id="GO:0051539">
    <property type="term" value="F:4 iron, 4 sulfur cluster binding"/>
    <property type="evidence" value="ECO:0007669"/>
    <property type="project" value="UniProtKB-KW"/>
</dbReference>
<dbReference type="GO" id="GO:0008409">
    <property type="term" value="F:5'-3' exonuclease activity"/>
    <property type="evidence" value="ECO:0007669"/>
    <property type="project" value="UniProtKB-UniRule"/>
</dbReference>
<dbReference type="GO" id="GO:0005524">
    <property type="term" value="F:ATP binding"/>
    <property type="evidence" value="ECO:0007669"/>
    <property type="project" value="UniProtKB-UniRule"/>
</dbReference>
<dbReference type="GO" id="GO:0003690">
    <property type="term" value="F:double-stranded DNA binding"/>
    <property type="evidence" value="ECO:0007669"/>
    <property type="project" value="UniProtKB-UniRule"/>
</dbReference>
<dbReference type="GO" id="GO:0004386">
    <property type="term" value="F:helicase activity"/>
    <property type="evidence" value="ECO:0007669"/>
    <property type="project" value="UniProtKB-KW"/>
</dbReference>
<dbReference type="GO" id="GO:0046872">
    <property type="term" value="F:metal ion binding"/>
    <property type="evidence" value="ECO:0007669"/>
    <property type="project" value="UniProtKB-KW"/>
</dbReference>
<dbReference type="GO" id="GO:0000724">
    <property type="term" value="P:double-strand break repair via homologous recombination"/>
    <property type="evidence" value="ECO:0007669"/>
    <property type="project" value="UniProtKB-UniRule"/>
</dbReference>
<dbReference type="FunFam" id="3.90.320.10:FF:000006">
    <property type="entry name" value="ATP-dependent helicase/deoxyribonuclease subunit B"/>
    <property type="match status" value="1"/>
</dbReference>
<dbReference type="Gene3D" id="3.90.320.10">
    <property type="match status" value="1"/>
</dbReference>
<dbReference type="Gene3D" id="6.10.140.1030">
    <property type="match status" value="1"/>
</dbReference>
<dbReference type="Gene3D" id="3.40.50.300">
    <property type="entry name" value="P-loop containing nucleotide triphosphate hydrolases"/>
    <property type="match status" value="4"/>
</dbReference>
<dbReference type="HAMAP" id="MF_01452">
    <property type="entry name" value="AddB_type1"/>
    <property type="match status" value="1"/>
</dbReference>
<dbReference type="InterPro" id="IPR049035">
    <property type="entry name" value="ADDB_N"/>
</dbReference>
<dbReference type="InterPro" id="IPR014140">
    <property type="entry name" value="DNA_helicase_suAddB"/>
</dbReference>
<dbReference type="InterPro" id="IPR014017">
    <property type="entry name" value="DNA_helicase_UvrD-like_C"/>
</dbReference>
<dbReference type="InterPro" id="IPR027417">
    <property type="entry name" value="P-loop_NTPase"/>
</dbReference>
<dbReference type="InterPro" id="IPR011604">
    <property type="entry name" value="PDDEXK-like_dom_sf"/>
</dbReference>
<dbReference type="InterPro" id="IPR038726">
    <property type="entry name" value="PDDEXK_AddAB-type"/>
</dbReference>
<dbReference type="NCBIfam" id="TIGR02773">
    <property type="entry name" value="addB_Gpos"/>
    <property type="match status" value="1"/>
</dbReference>
<dbReference type="PANTHER" id="PTHR30591">
    <property type="entry name" value="RECBCD ENZYME SUBUNIT RECC"/>
    <property type="match status" value="1"/>
</dbReference>
<dbReference type="PANTHER" id="PTHR30591:SF1">
    <property type="entry name" value="RECBCD ENZYME SUBUNIT RECC"/>
    <property type="match status" value="1"/>
</dbReference>
<dbReference type="Pfam" id="PF21445">
    <property type="entry name" value="ADDB_N"/>
    <property type="match status" value="1"/>
</dbReference>
<dbReference type="Pfam" id="PF12705">
    <property type="entry name" value="PDDEXK_1"/>
    <property type="match status" value="1"/>
</dbReference>
<dbReference type="SUPFAM" id="SSF52540">
    <property type="entry name" value="P-loop containing nucleoside triphosphate hydrolases"/>
    <property type="match status" value="2"/>
</dbReference>
<dbReference type="PROSITE" id="PS51198">
    <property type="entry name" value="UVRD_HELICASE_ATP_BIND"/>
    <property type="match status" value="1"/>
</dbReference>
<dbReference type="PROSITE" id="PS51217">
    <property type="entry name" value="UVRD_HELICASE_CTER"/>
    <property type="match status" value="1"/>
</dbReference>
<gene>
    <name evidence="1" type="primary">addB</name>
    <name type="ordered locus">BPUM_0993</name>
</gene>
<proteinExistence type="inferred from homology"/>
<feature type="chain" id="PRO_0000379163" description="ATP-dependent helicase/deoxyribonuclease subunit B">
    <location>
        <begin position="1"/>
        <end position="1169"/>
    </location>
</feature>
<feature type="domain" description="UvrD-like helicase ATP-binding" evidence="1">
    <location>
        <begin position="1"/>
        <end position="285"/>
    </location>
</feature>
<feature type="domain" description="UvrD-like helicase C-terminal" evidence="1">
    <location>
        <begin position="280"/>
        <end position="586"/>
    </location>
</feature>
<feature type="binding site" evidence="1">
    <location>
        <begin position="8"/>
        <end position="15"/>
    </location>
    <ligand>
        <name>ATP</name>
        <dbReference type="ChEBI" id="CHEBI:30616"/>
    </ligand>
</feature>
<feature type="binding site" evidence="1">
    <location>
        <position position="801"/>
    </location>
    <ligand>
        <name>[4Fe-4S] cluster</name>
        <dbReference type="ChEBI" id="CHEBI:49883"/>
    </ligand>
</feature>
<feature type="binding site" evidence="1">
    <location>
        <position position="1121"/>
    </location>
    <ligand>
        <name>[4Fe-4S] cluster</name>
        <dbReference type="ChEBI" id="CHEBI:49883"/>
    </ligand>
</feature>
<feature type="binding site" evidence="1">
    <location>
        <position position="1124"/>
    </location>
    <ligand>
        <name>[4Fe-4S] cluster</name>
        <dbReference type="ChEBI" id="CHEBI:49883"/>
    </ligand>
</feature>
<feature type="binding site" evidence="1">
    <location>
        <position position="1130"/>
    </location>
    <ligand>
        <name>[4Fe-4S] cluster</name>
        <dbReference type="ChEBI" id="CHEBI:49883"/>
    </ligand>
</feature>
<reference key="1">
    <citation type="journal article" date="2007" name="PLoS ONE">
        <title>Paradoxical DNA repair and peroxide resistance gene conservation in Bacillus pumilus SAFR-032.</title>
        <authorList>
            <person name="Gioia J."/>
            <person name="Yerrapragada S."/>
            <person name="Qin X."/>
            <person name="Jiang H."/>
            <person name="Igboeli O.C."/>
            <person name="Muzny D."/>
            <person name="Dugan-Rocha S."/>
            <person name="Ding Y."/>
            <person name="Hawes A."/>
            <person name="Liu W."/>
            <person name="Perez L."/>
            <person name="Kovar C."/>
            <person name="Dinh H."/>
            <person name="Lee S."/>
            <person name="Nazareth L."/>
            <person name="Blyth P."/>
            <person name="Holder M."/>
            <person name="Buhay C."/>
            <person name="Tirumalai M.R."/>
            <person name="Liu Y."/>
            <person name="Dasgupta I."/>
            <person name="Bokhetache L."/>
            <person name="Fujita M."/>
            <person name="Karouia F."/>
            <person name="Eswara Moorthy P."/>
            <person name="Siefert J."/>
            <person name="Uzman A."/>
            <person name="Buzumbo P."/>
            <person name="Verma A."/>
            <person name="Zwiya H."/>
            <person name="McWilliams B.D."/>
            <person name="Olowu A."/>
            <person name="Clinkenbeard K.D."/>
            <person name="Newcombe D."/>
            <person name="Golebiewski L."/>
            <person name="Petrosino J.F."/>
            <person name="Nicholson W.L."/>
            <person name="Fox G.E."/>
            <person name="Venkateswaran K."/>
            <person name="Highlander S.K."/>
            <person name="Weinstock G.M."/>
        </authorList>
    </citation>
    <scope>NUCLEOTIDE SEQUENCE [LARGE SCALE GENOMIC DNA]</scope>
    <source>
        <strain>SAFR-032</strain>
    </source>
</reference>
<protein>
    <recommendedName>
        <fullName evidence="1">ATP-dependent helicase/deoxyribonuclease subunit B</fullName>
        <ecNumber evidence="1">3.1.-.-</ecNumber>
    </recommendedName>
    <alternativeName>
        <fullName evidence="1">ATP-dependent helicase/nuclease subunit AddB</fullName>
    </alternativeName>
</protein>
<sequence length="1169" mass="134856">MEIQFLAGRSGSGKTTAILEEIKEQLRLDPLGPPIIFLVPDQMTFLMEYELAKTSEAGGMIRAKVFSFTRLAWSILQQTGGANRQFVTSTGIQMLLRKVIEEQKDKFKVFKKASDKPGFVEQIEKTMAEFKRYCMLPEEIEKISVESMLSEYTEERRAAEKLHDLHVLYQQMEEHLQDEYVHSEDYLNLLAQQIPSAEEIKGAHIYIDGFYQFTPQQLLVIEQLLLHAAKVTAAFTVDQSYHDRQPNELDLFRMTGKTYFQLYQLAKECGADISETIFERNHRHLYTPDLAYLEHQYEQRPVQPYQENTPHLTVSKSASKRAEIEGVARDILDLVREKGLRLRDISVVARHVDDYKDTLKEVFRDYDIPFFIDGNESMQYHPLIELIRSSLDVIKGNWRYEAVFRCVKTEFLFPLEITKNKAREQADQLENYCIAYGVKGERWTNGSRFHYRRFQSLDEDFRQTDQEIEMEQMLNDVKEWITPPLYQLQKRLKNAQKVRDMVEAVYVFLEEIQVPDKLEKARLEAEEAGRLAEAMQHGQVWDAVIQLMDEFVDMLGDEELSFPLFQQMIDTGLASLKFALIPPSLDQVFIGSMDLSRMYQVKCMFIIGVNDGVIPARPSDESVLSEDDREWLKRAGAELAETGKERLLDEQFLIYQALSSPSHHLYLSYAASDAEGRSLLPSPLIKYCQELMPNHQQALYVLDPELLEDDEQLKFVANEHVSLSYTISQLQQWLNQYPISGVWWSVYNYLMTSPNRDVSKNIMSSLFFTNRAKPLKPNVTKELYGDHIQGSVSRMEKFNACAFSHFASHGLKLKDRQFYKLEAPDIGQLFHSALKHISDTLVEQKKDWKNLTKEDCVTYSRHAIEQLAPRLQKEILLSSNRHAYIKEKLQKILIRVSSILSEHAKVSGFSPVGLELGFGGQGPLPPFTFQLKNGCTMELVGRIDRVDKAEGSKGLFLRIVDYKSSEKGLDLAEVYYGLALQMLTYLDLTITYSKEWLGIEATPAGILYFHIHDPFIQAPIPLAEDEIEQEIFKKFKMKGLLLEDVEAVKLMDQTLESGRSQVIQAGLKKDGSFRSDSAVLSEDHFHILTQHVRRTFEEAGERITNGEVAINPYKLKDQTPCRFCSFKSICQFDESIEDNDFRVLTSEKDDVVIERIKKEGDQYANTKTE</sequence>
<keyword id="KW-0004">4Fe-4S</keyword>
<keyword id="KW-0067">ATP-binding</keyword>
<keyword id="KW-0227">DNA damage</keyword>
<keyword id="KW-0234">DNA repair</keyword>
<keyword id="KW-0238">DNA-binding</keyword>
<keyword id="KW-0269">Exonuclease</keyword>
<keyword id="KW-0347">Helicase</keyword>
<keyword id="KW-0378">Hydrolase</keyword>
<keyword id="KW-0408">Iron</keyword>
<keyword id="KW-0411">Iron-sulfur</keyword>
<keyword id="KW-0479">Metal-binding</keyword>
<keyword id="KW-0540">Nuclease</keyword>
<keyword id="KW-0547">Nucleotide-binding</keyword>
<name>ADDB_BACP2</name>
<comment type="function">
    <text evidence="1">The heterodimer acts as both an ATP-dependent DNA helicase and an ATP-dependent, dual-direction single-stranded exonuclease. Recognizes the chi site generating a DNA molecule suitable for the initiation of homologous recombination. The AddB subunit has 5' -&gt; 3' nuclease activity but not helicase activity.</text>
</comment>
<comment type="cofactor">
    <cofactor evidence="1">
        <name>Mg(2+)</name>
        <dbReference type="ChEBI" id="CHEBI:18420"/>
    </cofactor>
</comment>
<comment type="cofactor">
    <cofactor evidence="1">
        <name>[4Fe-4S] cluster</name>
        <dbReference type="ChEBI" id="CHEBI:49883"/>
    </cofactor>
    <text evidence="1">Binds 1 [4Fe-4S] cluster.</text>
</comment>
<comment type="subunit">
    <text evidence="1">Heterodimer of AddA and AddB.</text>
</comment>
<comment type="miscellaneous">
    <text evidence="1">Despite having conserved helicase domains, this subunit does not have helicase activity.</text>
</comment>
<comment type="similarity">
    <text evidence="1">Belongs to the helicase family. AddB/RexB type 1 subfamily.</text>
</comment>